<dbReference type="EC" id="6.1.1.17" evidence="1"/>
<dbReference type="EMBL" id="CP000158">
    <property type="protein sequence ID" value="ABI77242.1"/>
    <property type="molecule type" value="Genomic_DNA"/>
</dbReference>
<dbReference type="SMR" id="Q0C1A6"/>
<dbReference type="STRING" id="228405.HNE_1783"/>
<dbReference type="KEGG" id="hne:HNE_1783"/>
<dbReference type="eggNOG" id="COG0008">
    <property type="taxonomic scope" value="Bacteria"/>
</dbReference>
<dbReference type="HOGENOM" id="CLU_015768_6_3_5"/>
<dbReference type="Proteomes" id="UP000001959">
    <property type="component" value="Chromosome"/>
</dbReference>
<dbReference type="GO" id="GO:0005829">
    <property type="term" value="C:cytosol"/>
    <property type="evidence" value="ECO:0007669"/>
    <property type="project" value="TreeGrafter"/>
</dbReference>
<dbReference type="GO" id="GO:0005524">
    <property type="term" value="F:ATP binding"/>
    <property type="evidence" value="ECO:0007669"/>
    <property type="project" value="UniProtKB-UniRule"/>
</dbReference>
<dbReference type="GO" id="GO:0004818">
    <property type="term" value="F:glutamate-tRNA ligase activity"/>
    <property type="evidence" value="ECO:0007669"/>
    <property type="project" value="UniProtKB-UniRule"/>
</dbReference>
<dbReference type="GO" id="GO:0000049">
    <property type="term" value="F:tRNA binding"/>
    <property type="evidence" value="ECO:0007669"/>
    <property type="project" value="InterPro"/>
</dbReference>
<dbReference type="GO" id="GO:0008270">
    <property type="term" value="F:zinc ion binding"/>
    <property type="evidence" value="ECO:0007669"/>
    <property type="project" value="InterPro"/>
</dbReference>
<dbReference type="GO" id="GO:0006424">
    <property type="term" value="P:glutamyl-tRNA aminoacylation"/>
    <property type="evidence" value="ECO:0007669"/>
    <property type="project" value="UniProtKB-UniRule"/>
</dbReference>
<dbReference type="CDD" id="cd00808">
    <property type="entry name" value="GluRS_core"/>
    <property type="match status" value="1"/>
</dbReference>
<dbReference type="FunFam" id="3.40.50.620:FF:000007">
    <property type="entry name" value="Glutamate--tRNA ligase"/>
    <property type="match status" value="1"/>
</dbReference>
<dbReference type="Gene3D" id="1.10.10.350">
    <property type="match status" value="1"/>
</dbReference>
<dbReference type="Gene3D" id="3.40.50.620">
    <property type="entry name" value="HUPs"/>
    <property type="match status" value="1"/>
</dbReference>
<dbReference type="HAMAP" id="MF_00022">
    <property type="entry name" value="Glu_tRNA_synth_type1"/>
    <property type="match status" value="1"/>
</dbReference>
<dbReference type="InterPro" id="IPR045462">
    <property type="entry name" value="aa-tRNA-synth_I_cd-bd"/>
</dbReference>
<dbReference type="InterPro" id="IPR020751">
    <property type="entry name" value="aa-tRNA-synth_I_codon-bd_sub2"/>
</dbReference>
<dbReference type="InterPro" id="IPR001412">
    <property type="entry name" value="aa-tRNA-synth_I_CS"/>
</dbReference>
<dbReference type="InterPro" id="IPR008925">
    <property type="entry name" value="aa_tRNA-synth_I_cd-bd_sf"/>
</dbReference>
<dbReference type="InterPro" id="IPR004527">
    <property type="entry name" value="Glu-tRNA-ligase_bac/mito"/>
</dbReference>
<dbReference type="InterPro" id="IPR000924">
    <property type="entry name" value="Glu/Gln-tRNA-synth"/>
</dbReference>
<dbReference type="InterPro" id="IPR020058">
    <property type="entry name" value="Glu/Gln-tRNA-synth_Ib_cat-dom"/>
</dbReference>
<dbReference type="InterPro" id="IPR049940">
    <property type="entry name" value="GluQ/Sye"/>
</dbReference>
<dbReference type="InterPro" id="IPR033910">
    <property type="entry name" value="GluRS_core"/>
</dbReference>
<dbReference type="InterPro" id="IPR014729">
    <property type="entry name" value="Rossmann-like_a/b/a_fold"/>
</dbReference>
<dbReference type="NCBIfam" id="TIGR00464">
    <property type="entry name" value="gltX_bact"/>
    <property type="match status" value="1"/>
</dbReference>
<dbReference type="PANTHER" id="PTHR43311">
    <property type="entry name" value="GLUTAMATE--TRNA LIGASE"/>
    <property type="match status" value="1"/>
</dbReference>
<dbReference type="PANTHER" id="PTHR43311:SF2">
    <property type="entry name" value="GLUTAMATE--TRNA LIGASE, MITOCHONDRIAL-RELATED"/>
    <property type="match status" value="1"/>
</dbReference>
<dbReference type="Pfam" id="PF19269">
    <property type="entry name" value="Anticodon_2"/>
    <property type="match status" value="1"/>
</dbReference>
<dbReference type="Pfam" id="PF00749">
    <property type="entry name" value="tRNA-synt_1c"/>
    <property type="match status" value="1"/>
</dbReference>
<dbReference type="PRINTS" id="PR00987">
    <property type="entry name" value="TRNASYNTHGLU"/>
</dbReference>
<dbReference type="SUPFAM" id="SSF48163">
    <property type="entry name" value="An anticodon-binding domain of class I aminoacyl-tRNA synthetases"/>
    <property type="match status" value="1"/>
</dbReference>
<dbReference type="SUPFAM" id="SSF52374">
    <property type="entry name" value="Nucleotidylyl transferase"/>
    <property type="match status" value="1"/>
</dbReference>
<dbReference type="PROSITE" id="PS00178">
    <property type="entry name" value="AA_TRNA_LIGASE_I"/>
    <property type="match status" value="1"/>
</dbReference>
<feature type="chain" id="PRO_0000367691" description="Glutamate--tRNA ligase 1">
    <location>
        <begin position="1"/>
        <end position="486"/>
    </location>
</feature>
<feature type="short sequence motif" description="'HIGH' region" evidence="1">
    <location>
        <begin position="9"/>
        <end position="19"/>
    </location>
</feature>
<feature type="short sequence motif" description="'KMSKS' region" evidence="1">
    <location>
        <begin position="259"/>
        <end position="263"/>
    </location>
</feature>
<feature type="binding site" evidence="1">
    <location>
        <position position="262"/>
    </location>
    <ligand>
        <name>ATP</name>
        <dbReference type="ChEBI" id="CHEBI:30616"/>
    </ligand>
</feature>
<comment type="function">
    <text evidence="1">Catalyzes the attachment of glutamate to tRNA(Glu) in a two-step reaction: glutamate is first activated by ATP to form Glu-AMP and then transferred to the acceptor end of tRNA(Glu).</text>
</comment>
<comment type="catalytic activity">
    <reaction evidence="1">
        <text>tRNA(Glu) + L-glutamate + ATP = L-glutamyl-tRNA(Glu) + AMP + diphosphate</text>
        <dbReference type="Rhea" id="RHEA:23540"/>
        <dbReference type="Rhea" id="RHEA-COMP:9663"/>
        <dbReference type="Rhea" id="RHEA-COMP:9680"/>
        <dbReference type="ChEBI" id="CHEBI:29985"/>
        <dbReference type="ChEBI" id="CHEBI:30616"/>
        <dbReference type="ChEBI" id="CHEBI:33019"/>
        <dbReference type="ChEBI" id="CHEBI:78442"/>
        <dbReference type="ChEBI" id="CHEBI:78520"/>
        <dbReference type="ChEBI" id="CHEBI:456215"/>
        <dbReference type="EC" id="6.1.1.17"/>
    </reaction>
</comment>
<comment type="subunit">
    <text evidence="1">Monomer.</text>
</comment>
<comment type="subcellular location">
    <subcellularLocation>
        <location evidence="1">Cytoplasm</location>
    </subcellularLocation>
</comment>
<comment type="similarity">
    <text evidence="1">Belongs to the class-I aminoacyl-tRNA synthetase family. Glutamate--tRNA ligase type 1 subfamily.</text>
</comment>
<gene>
    <name evidence="1" type="primary">gltX1</name>
    <name type="ordered locus">HNE_1783</name>
</gene>
<evidence type="ECO:0000255" key="1">
    <source>
        <dbReference type="HAMAP-Rule" id="MF_00022"/>
    </source>
</evidence>
<name>SYE1_HYPNA</name>
<reference key="1">
    <citation type="journal article" date="2006" name="J. Bacteriol.">
        <title>Comparative genomic evidence for a close relationship between the dimorphic prosthecate bacteria Hyphomonas neptunium and Caulobacter crescentus.</title>
        <authorList>
            <person name="Badger J.H."/>
            <person name="Hoover T.R."/>
            <person name="Brun Y.V."/>
            <person name="Weiner R.M."/>
            <person name="Laub M.T."/>
            <person name="Alexandre G."/>
            <person name="Mrazek J."/>
            <person name="Ren Q."/>
            <person name="Paulsen I.T."/>
            <person name="Nelson K.E."/>
            <person name="Khouri H.M."/>
            <person name="Radune D."/>
            <person name="Sosa J."/>
            <person name="Dodson R.J."/>
            <person name="Sullivan S.A."/>
            <person name="Rosovitz M.J."/>
            <person name="Madupu R."/>
            <person name="Brinkac L.M."/>
            <person name="Durkin A.S."/>
            <person name="Daugherty S.C."/>
            <person name="Kothari S.P."/>
            <person name="Giglio M.G."/>
            <person name="Zhou L."/>
            <person name="Haft D.H."/>
            <person name="Selengut J.D."/>
            <person name="Davidsen T.M."/>
            <person name="Yang Q."/>
            <person name="Zafar N."/>
            <person name="Ward N.L."/>
        </authorList>
    </citation>
    <scope>NUCLEOTIDE SEQUENCE [LARGE SCALE GENOMIC DNA]</scope>
    <source>
        <strain>ATCC 15444</strain>
    </source>
</reference>
<protein>
    <recommendedName>
        <fullName evidence="1">Glutamate--tRNA ligase 1</fullName>
        <ecNumber evidence="1">6.1.1.17</ecNumber>
    </recommendedName>
    <alternativeName>
        <fullName evidence="1">Glutamyl-tRNA synthetase 1</fullName>
        <shortName evidence="1">GluRS 1</shortName>
    </alternativeName>
</protein>
<accession>Q0C1A6</accession>
<keyword id="KW-0030">Aminoacyl-tRNA synthetase</keyword>
<keyword id="KW-0067">ATP-binding</keyword>
<keyword id="KW-0963">Cytoplasm</keyword>
<keyword id="KW-0436">Ligase</keyword>
<keyword id="KW-0547">Nucleotide-binding</keyword>
<keyword id="KW-0648">Protein biosynthesis</keyword>
<keyword id="KW-1185">Reference proteome</keyword>
<organism>
    <name type="scientific">Hyphomonas neptunium (strain ATCC 15444)</name>
    <dbReference type="NCBI Taxonomy" id="228405"/>
    <lineage>
        <taxon>Bacteria</taxon>
        <taxon>Pseudomonadati</taxon>
        <taxon>Pseudomonadota</taxon>
        <taxon>Alphaproteobacteria</taxon>
        <taxon>Hyphomonadales</taxon>
        <taxon>Hyphomonadaceae</taxon>
        <taxon>Hyphomonas</taxon>
    </lineage>
</organism>
<sequence length="486" mass="53324">MSVVTRFAPSPTGMLHIGGARTALFNYLFARRNGGRFLLRIEDTDRERSTQEATDAILDAMEWLGLTPDEPPVMQSAQVDRHAAVAHDMVARGTAFRCYVTPEELQARRDLGEEKRQAAKQEGISDAEKEALLAEASQLLAPFRSPYRDGASPPSPDAPFTVRLRAPESGPRTVEDGVQGTVTIDASEIDDLVMLRADGTPTYMLAVVVDDHDMGITHVIRGDDHLRNTFRQVPIYEAMGWSVPNFSHVPMIHGNDGAKLSKRHGALSTTAYRDMGYLPEAMKAYLLRLGWSHGDQEIFTDEEAVQVFDVSGINKAPARLDLDKLATVNAHFMRLAADERLFDLICPVLSKNCSLSDAEVARIRAALPHMKDRGSTLIELANAFAFLYAKRPLELNKNAVKALSDEGKLRLKGLYDDLQRMSQWSGASISETIKSYCAATGLSMGQIGPPLRAALTGGLPAPDLAPVMDWLGREETLARIDDQLAG</sequence>
<proteinExistence type="inferred from homology"/>